<gene>
    <name evidence="1" type="primary">cshA</name>
    <name type="ordered locus">SACOL2072</name>
</gene>
<name>CSHA_STAAC</name>
<sequence>MQNFKELGISDNTVQSLESMGFKEPTPIQKDSIPYALQGIDILGQAQTGTGKTGAFGIPLIEKVVGKQGVQSLILAPTRELAMQVAEQLREFSRGQGVQVVTVFGGMPIERQIKALKKGPQIVVGTPGRVIDHLNRRTLKTDGIHTLILDEADEMMNMGFIDDMRFIMDKIPAVQRQTMLFSATMPKAIQALVQQFMKSPKIIKTMNNEMSDPQIEEFYTIVKELEKFDTFTNFLDVHQPELAIVFGRTKRRVDELTSALISKGYKAEGLHGDITQAKRLEVLKKFKNDQINILVATDVAARGLDISGVSHVYNFDIPQDTESYTHRIGRTGRAGKEGIAVTFVNPIEMDYIRQIEDANGRKMSALRPPHRKEVLQAREDDIKEKVENWMSKESESRLKRISTELLNEYNDVDLVAALLQELVEANDEVEVQLTFEKPLSRKGRNGKPSGSRNRNSKRGNPKFDSKSKRSKGYSSKKKSTKKFDRKEKSSGGSRPMKGRTFADHQK</sequence>
<dbReference type="EC" id="3.6.4.13" evidence="1"/>
<dbReference type="EMBL" id="CP000046">
    <property type="protein sequence ID" value="AAW37034.1"/>
    <property type="molecule type" value="Genomic_DNA"/>
</dbReference>
<dbReference type="RefSeq" id="WP_001178942.1">
    <property type="nucleotide sequence ID" value="NZ_JBGOFO010000007.1"/>
</dbReference>
<dbReference type="SMR" id="Q5HEB9"/>
<dbReference type="KEGG" id="sac:SACOL2072"/>
<dbReference type="HOGENOM" id="CLU_003041_21_1_9"/>
<dbReference type="Proteomes" id="UP000000530">
    <property type="component" value="Chromosome"/>
</dbReference>
<dbReference type="GO" id="GO:0005829">
    <property type="term" value="C:cytosol"/>
    <property type="evidence" value="ECO:0007669"/>
    <property type="project" value="TreeGrafter"/>
</dbReference>
<dbReference type="GO" id="GO:0005840">
    <property type="term" value="C:ribosome"/>
    <property type="evidence" value="ECO:0007669"/>
    <property type="project" value="TreeGrafter"/>
</dbReference>
<dbReference type="GO" id="GO:0005524">
    <property type="term" value="F:ATP binding"/>
    <property type="evidence" value="ECO:0007669"/>
    <property type="project" value="UniProtKB-UniRule"/>
</dbReference>
<dbReference type="GO" id="GO:0016887">
    <property type="term" value="F:ATP hydrolysis activity"/>
    <property type="evidence" value="ECO:0007669"/>
    <property type="project" value="RHEA"/>
</dbReference>
<dbReference type="GO" id="GO:0003724">
    <property type="term" value="F:RNA helicase activity"/>
    <property type="evidence" value="ECO:0007669"/>
    <property type="project" value="UniProtKB-UniRule"/>
</dbReference>
<dbReference type="GO" id="GO:0033592">
    <property type="term" value="F:RNA strand annealing activity"/>
    <property type="evidence" value="ECO:0007669"/>
    <property type="project" value="TreeGrafter"/>
</dbReference>
<dbReference type="GO" id="GO:0009409">
    <property type="term" value="P:response to cold"/>
    <property type="evidence" value="ECO:0007669"/>
    <property type="project" value="TreeGrafter"/>
</dbReference>
<dbReference type="GO" id="GO:0006401">
    <property type="term" value="P:RNA catabolic process"/>
    <property type="evidence" value="ECO:0007669"/>
    <property type="project" value="UniProtKB-UniRule"/>
</dbReference>
<dbReference type="CDD" id="cd00268">
    <property type="entry name" value="DEADc"/>
    <property type="match status" value="1"/>
</dbReference>
<dbReference type="CDD" id="cd18787">
    <property type="entry name" value="SF2_C_DEAD"/>
    <property type="match status" value="1"/>
</dbReference>
<dbReference type="FunFam" id="3.40.50.300:FF:000108">
    <property type="entry name" value="ATP-dependent RNA helicase RhlE"/>
    <property type="match status" value="1"/>
</dbReference>
<dbReference type="Gene3D" id="3.40.50.300">
    <property type="entry name" value="P-loop containing nucleotide triphosphate hydrolases"/>
    <property type="match status" value="2"/>
</dbReference>
<dbReference type="HAMAP" id="MF_01493">
    <property type="entry name" value="DEAD_helicase_CshA"/>
    <property type="match status" value="1"/>
</dbReference>
<dbReference type="InterPro" id="IPR011545">
    <property type="entry name" value="DEAD/DEAH_box_helicase_dom"/>
</dbReference>
<dbReference type="InterPro" id="IPR050547">
    <property type="entry name" value="DEAD_box_RNA_helicases"/>
</dbReference>
<dbReference type="InterPro" id="IPR030880">
    <property type="entry name" value="DEAD_helicase_CshA"/>
</dbReference>
<dbReference type="InterPro" id="IPR014001">
    <property type="entry name" value="Helicase_ATP-bd"/>
</dbReference>
<dbReference type="InterPro" id="IPR001650">
    <property type="entry name" value="Helicase_C-like"/>
</dbReference>
<dbReference type="InterPro" id="IPR027417">
    <property type="entry name" value="P-loop_NTPase"/>
</dbReference>
<dbReference type="InterPro" id="IPR000629">
    <property type="entry name" value="RNA-helicase_DEAD-box_CS"/>
</dbReference>
<dbReference type="InterPro" id="IPR014014">
    <property type="entry name" value="RNA_helicase_DEAD_Q_motif"/>
</dbReference>
<dbReference type="PANTHER" id="PTHR47963">
    <property type="entry name" value="DEAD-BOX ATP-DEPENDENT RNA HELICASE 47, MITOCHONDRIAL"/>
    <property type="match status" value="1"/>
</dbReference>
<dbReference type="PANTHER" id="PTHR47963:SF5">
    <property type="entry name" value="DEAD-BOX ATP-DEPENDENT RNA HELICASE CSHA"/>
    <property type="match status" value="1"/>
</dbReference>
<dbReference type="Pfam" id="PF00270">
    <property type="entry name" value="DEAD"/>
    <property type="match status" value="1"/>
</dbReference>
<dbReference type="Pfam" id="PF00271">
    <property type="entry name" value="Helicase_C"/>
    <property type="match status" value="1"/>
</dbReference>
<dbReference type="SMART" id="SM00487">
    <property type="entry name" value="DEXDc"/>
    <property type="match status" value="1"/>
</dbReference>
<dbReference type="SMART" id="SM00490">
    <property type="entry name" value="HELICc"/>
    <property type="match status" value="1"/>
</dbReference>
<dbReference type="SUPFAM" id="SSF52540">
    <property type="entry name" value="P-loop containing nucleoside triphosphate hydrolases"/>
    <property type="match status" value="1"/>
</dbReference>
<dbReference type="PROSITE" id="PS00039">
    <property type="entry name" value="DEAD_ATP_HELICASE"/>
    <property type="match status" value="1"/>
</dbReference>
<dbReference type="PROSITE" id="PS51192">
    <property type="entry name" value="HELICASE_ATP_BIND_1"/>
    <property type="match status" value="1"/>
</dbReference>
<dbReference type="PROSITE" id="PS51194">
    <property type="entry name" value="HELICASE_CTER"/>
    <property type="match status" value="1"/>
</dbReference>
<dbReference type="PROSITE" id="PS51195">
    <property type="entry name" value="Q_MOTIF"/>
    <property type="match status" value="1"/>
</dbReference>
<comment type="function">
    <text evidence="1">DEAD-box RNA helicase possibly involved in RNA degradation. Unwinds dsRNA in both 5'- and 3'-directions, has RNA-dependent ATPase activity.</text>
</comment>
<comment type="catalytic activity">
    <reaction evidence="1">
        <text>ATP + H2O = ADP + phosphate + H(+)</text>
        <dbReference type="Rhea" id="RHEA:13065"/>
        <dbReference type="ChEBI" id="CHEBI:15377"/>
        <dbReference type="ChEBI" id="CHEBI:15378"/>
        <dbReference type="ChEBI" id="CHEBI:30616"/>
        <dbReference type="ChEBI" id="CHEBI:43474"/>
        <dbReference type="ChEBI" id="CHEBI:456216"/>
        <dbReference type="EC" id="3.6.4.13"/>
    </reaction>
</comment>
<comment type="subunit">
    <text evidence="1">Oligomerizes, may be a member of the RNA degradosome.</text>
</comment>
<comment type="subcellular location">
    <subcellularLocation>
        <location evidence="1">Cytoplasm</location>
    </subcellularLocation>
</comment>
<comment type="similarity">
    <text evidence="1">Belongs to the DEAD box helicase family. CshA subfamily.</text>
</comment>
<keyword id="KW-0067">ATP-binding</keyword>
<keyword id="KW-0963">Cytoplasm</keyword>
<keyword id="KW-0347">Helicase</keyword>
<keyword id="KW-0378">Hydrolase</keyword>
<keyword id="KW-0547">Nucleotide-binding</keyword>
<keyword id="KW-0694">RNA-binding</keyword>
<keyword id="KW-0346">Stress response</keyword>
<proteinExistence type="inferred from homology"/>
<evidence type="ECO:0000255" key="1">
    <source>
        <dbReference type="HAMAP-Rule" id="MF_01493"/>
    </source>
</evidence>
<evidence type="ECO:0000256" key="2">
    <source>
        <dbReference type="SAM" id="MobiDB-lite"/>
    </source>
</evidence>
<protein>
    <recommendedName>
        <fullName evidence="1">DEAD-box ATP-dependent RNA helicase CshA</fullName>
        <ecNumber evidence="1">3.6.4.13</ecNumber>
    </recommendedName>
</protein>
<feature type="chain" id="PRO_0000284819" description="DEAD-box ATP-dependent RNA helicase CshA">
    <location>
        <begin position="1"/>
        <end position="506"/>
    </location>
</feature>
<feature type="domain" description="Helicase ATP-binding" evidence="1">
    <location>
        <begin position="33"/>
        <end position="203"/>
    </location>
</feature>
<feature type="domain" description="Helicase C-terminal" evidence="1">
    <location>
        <begin position="214"/>
        <end position="375"/>
    </location>
</feature>
<feature type="region of interest" description="Disordered" evidence="2">
    <location>
        <begin position="436"/>
        <end position="506"/>
    </location>
</feature>
<feature type="short sequence motif" description="Q motif">
    <location>
        <begin position="2"/>
        <end position="30"/>
    </location>
</feature>
<feature type="short sequence motif" description="DEAD box">
    <location>
        <begin position="150"/>
        <end position="153"/>
    </location>
</feature>
<feature type="compositionally biased region" description="Basic residues" evidence="2">
    <location>
        <begin position="468"/>
        <end position="480"/>
    </location>
</feature>
<feature type="binding site" evidence="1">
    <location>
        <begin position="46"/>
        <end position="53"/>
    </location>
    <ligand>
        <name>ATP</name>
        <dbReference type="ChEBI" id="CHEBI:30616"/>
    </ligand>
</feature>
<accession>Q5HEB9</accession>
<organism>
    <name type="scientific">Staphylococcus aureus (strain COL)</name>
    <dbReference type="NCBI Taxonomy" id="93062"/>
    <lineage>
        <taxon>Bacteria</taxon>
        <taxon>Bacillati</taxon>
        <taxon>Bacillota</taxon>
        <taxon>Bacilli</taxon>
        <taxon>Bacillales</taxon>
        <taxon>Staphylococcaceae</taxon>
        <taxon>Staphylococcus</taxon>
    </lineage>
</organism>
<reference key="1">
    <citation type="journal article" date="2005" name="J. Bacteriol.">
        <title>Insights on evolution of virulence and resistance from the complete genome analysis of an early methicillin-resistant Staphylococcus aureus strain and a biofilm-producing methicillin-resistant Staphylococcus epidermidis strain.</title>
        <authorList>
            <person name="Gill S.R."/>
            <person name="Fouts D.E."/>
            <person name="Archer G.L."/>
            <person name="Mongodin E.F."/>
            <person name="DeBoy R.T."/>
            <person name="Ravel J."/>
            <person name="Paulsen I.T."/>
            <person name="Kolonay J.F."/>
            <person name="Brinkac L.M."/>
            <person name="Beanan M.J."/>
            <person name="Dodson R.J."/>
            <person name="Daugherty S.C."/>
            <person name="Madupu R."/>
            <person name="Angiuoli S.V."/>
            <person name="Durkin A.S."/>
            <person name="Haft D.H."/>
            <person name="Vamathevan J.J."/>
            <person name="Khouri H."/>
            <person name="Utterback T.R."/>
            <person name="Lee C."/>
            <person name="Dimitrov G."/>
            <person name="Jiang L."/>
            <person name="Qin H."/>
            <person name="Weidman J."/>
            <person name="Tran K."/>
            <person name="Kang K.H."/>
            <person name="Hance I.R."/>
            <person name="Nelson K.E."/>
            <person name="Fraser C.M."/>
        </authorList>
    </citation>
    <scope>NUCLEOTIDE SEQUENCE [LARGE SCALE GENOMIC DNA]</scope>
    <source>
        <strain>COL</strain>
    </source>
</reference>